<comment type="tissue specificity">
    <text evidence="1">Nacreous layer of shell.</text>
</comment>
<sequence>DSSVLTSEYPR</sequence>
<feature type="chain" id="PRO_0000371499" description="Uncharacterized protein SMPP18">
    <location>
        <begin position="1" status="less than"/>
        <end position="11" status="greater than"/>
    </location>
</feature>
<feature type="unsure residue" description="L or I" evidence="1">
    <location>
        <position position="5"/>
    </location>
</feature>
<feature type="non-terminal residue" evidence="2">
    <location>
        <position position="1"/>
    </location>
</feature>
<feature type="non-terminal residue" evidence="2">
    <location>
        <position position="11"/>
    </location>
</feature>
<organism>
    <name type="scientific">Nautilus macromphalus</name>
    <name type="common">Bellybutton nautilus</name>
    <dbReference type="NCBI Taxonomy" id="34576"/>
    <lineage>
        <taxon>Eukaryota</taxon>
        <taxon>Metazoa</taxon>
        <taxon>Spiralia</taxon>
        <taxon>Lophotrochozoa</taxon>
        <taxon>Mollusca</taxon>
        <taxon>Cephalopoda</taxon>
        <taxon>Nautiloidea</taxon>
        <taxon>Nautilida</taxon>
        <taxon>Nautilidae</taxon>
        <taxon>Nautilus</taxon>
    </lineage>
</organism>
<proteinExistence type="evidence at protein level"/>
<evidence type="ECO:0000269" key="1">
    <source>
    </source>
</evidence>
<evidence type="ECO:0000303" key="2">
    <source>
    </source>
</evidence>
<keyword id="KW-0903">Direct protein sequencing</keyword>
<name>SMP18_NAUMA</name>
<protein>
    <recommendedName>
        <fullName evidence="2">Uncharacterized protein SMPP18</fullName>
    </recommendedName>
</protein>
<reference key="1">
    <citation type="journal article" date="2009" name="ChemBioChem">
        <title>Evolution of nacre: biochemistry and 'shellomics' of the shell organic matrix of the cephalopod Nautilus macromphalus.</title>
        <authorList>
            <person name="Marie B."/>
            <person name="Marin F."/>
            <person name="Marie A."/>
            <person name="Bedouet L."/>
            <person name="Dubost L."/>
            <person name="Alcaraz G."/>
            <person name="Milet C."/>
            <person name="Luquet G."/>
        </authorList>
    </citation>
    <scope>PROTEIN SEQUENCE</scope>
    <scope>TISSUE SPECIFICITY</scope>
    <source>
        <tissue>Shell</tissue>
    </source>
</reference>
<accession>P85383</accession>